<gene>
    <name evidence="1" type="primary">rplI</name>
    <name type="ordered locus">ABO_2188</name>
</gene>
<proteinExistence type="inferred from homology"/>
<dbReference type="EMBL" id="AM286690">
    <property type="protein sequence ID" value="CAL17636.1"/>
    <property type="molecule type" value="Genomic_DNA"/>
</dbReference>
<dbReference type="RefSeq" id="WP_011589466.1">
    <property type="nucleotide sequence ID" value="NC_008260.1"/>
</dbReference>
<dbReference type="SMR" id="Q0VMG2"/>
<dbReference type="STRING" id="393595.ABO_2188"/>
<dbReference type="KEGG" id="abo:ABO_2188"/>
<dbReference type="eggNOG" id="COG0359">
    <property type="taxonomic scope" value="Bacteria"/>
</dbReference>
<dbReference type="HOGENOM" id="CLU_078938_4_1_6"/>
<dbReference type="OrthoDB" id="9788336at2"/>
<dbReference type="Proteomes" id="UP000008871">
    <property type="component" value="Chromosome"/>
</dbReference>
<dbReference type="GO" id="GO:1990904">
    <property type="term" value="C:ribonucleoprotein complex"/>
    <property type="evidence" value="ECO:0007669"/>
    <property type="project" value="UniProtKB-KW"/>
</dbReference>
<dbReference type="GO" id="GO:0005840">
    <property type="term" value="C:ribosome"/>
    <property type="evidence" value="ECO:0007669"/>
    <property type="project" value="UniProtKB-KW"/>
</dbReference>
<dbReference type="GO" id="GO:0019843">
    <property type="term" value="F:rRNA binding"/>
    <property type="evidence" value="ECO:0007669"/>
    <property type="project" value="UniProtKB-UniRule"/>
</dbReference>
<dbReference type="GO" id="GO:0003735">
    <property type="term" value="F:structural constituent of ribosome"/>
    <property type="evidence" value="ECO:0007669"/>
    <property type="project" value="InterPro"/>
</dbReference>
<dbReference type="GO" id="GO:0006412">
    <property type="term" value="P:translation"/>
    <property type="evidence" value="ECO:0007669"/>
    <property type="project" value="UniProtKB-UniRule"/>
</dbReference>
<dbReference type="Gene3D" id="3.10.430.100">
    <property type="entry name" value="Ribosomal protein L9, C-terminal domain"/>
    <property type="match status" value="1"/>
</dbReference>
<dbReference type="Gene3D" id="3.40.5.10">
    <property type="entry name" value="Ribosomal protein L9, N-terminal domain"/>
    <property type="match status" value="1"/>
</dbReference>
<dbReference type="HAMAP" id="MF_00503">
    <property type="entry name" value="Ribosomal_bL9"/>
    <property type="match status" value="1"/>
</dbReference>
<dbReference type="InterPro" id="IPR000244">
    <property type="entry name" value="Ribosomal_bL9"/>
</dbReference>
<dbReference type="InterPro" id="IPR009027">
    <property type="entry name" value="Ribosomal_bL9/RNase_H1_N"/>
</dbReference>
<dbReference type="InterPro" id="IPR020594">
    <property type="entry name" value="Ribosomal_bL9_bac/chp"/>
</dbReference>
<dbReference type="InterPro" id="IPR020069">
    <property type="entry name" value="Ribosomal_bL9_C"/>
</dbReference>
<dbReference type="InterPro" id="IPR036791">
    <property type="entry name" value="Ribosomal_bL9_C_sf"/>
</dbReference>
<dbReference type="InterPro" id="IPR020070">
    <property type="entry name" value="Ribosomal_bL9_N"/>
</dbReference>
<dbReference type="InterPro" id="IPR036935">
    <property type="entry name" value="Ribosomal_bL9_N_sf"/>
</dbReference>
<dbReference type="NCBIfam" id="TIGR00158">
    <property type="entry name" value="L9"/>
    <property type="match status" value="1"/>
</dbReference>
<dbReference type="PANTHER" id="PTHR21368">
    <property type="entry name" value="50S RIBOSOMAL PROTEIN L9"/>
    <property type="match status" value="1"/>
</dbReference>
<dbReference type="Pfam" id="PF03948">
    <property type="entry name" value="Ribosomal_L9_C"/>
    <property type="match status" value="1"/>
</dbReference>
<dbReference type="Pfam" id="PF01281">
    <property type="entry name" value="Ribosomal_L9_N"/>
    <property type="match status" value="1"/>
</dbReference>
<dbReference type="SUPFAM" id="SSF55658">
    <property type="entry name" value="L9 N-domain-like"/>
    <property type="match status" value="1"/>
</dbReference>
<dbReference type="SUPFAM" id="SSF55653">
    <property type="entry name" value="Ribosomal protein L9 C-domain"/>
    <property type="match status" value="1"/>
</dbReference>
<dbReference type="PROSITE" id="PS00651">
    <property type="entry name" value="RIBOSOMAL_L9"/>
    <property type="match status" value="1"/>
</dbReference>
<organism>
    <name type="scientific">Alcanivorax borkumensis (strain ATCC 700651 / DSM 11573 / NCIMB 13689 / SK2)</name>
    <dbReference type="NCBI Taxonomy" id="393595"/>
    <lineage>
        <taxon>Bacteria</taxon>
        <taxon>Pseudomonadati</taxon>
        <taxon>Pseudomonadota</taxon>
        <taxon>Gammaproteobacteria</taxon>
        <taxon>Oceanospirillales</taxon>
        <taxon>Alcanivoracaceae</taxon>
        <taxon>Alcanivorax</taxon>
    </lineage>
</organism>
<sequence>MQVILLETIKNLGDLGAVVDVRSGYGRNFLIPQGKALPATKANLAEVEQRRAELEKHAAQQLGAAQERAEKLNETTVSIAAKAGDEGKLFGSVGTRDIAEAISSSTGVDVEKAEVKLPHGALRTTGEFEIDLALHAEVTVAIKLAVVPAE</sequence>
<evidence type="ECO:0000255" key="1">
    <source>
        <dbReference type="HAMAP-Rule" id="MF_00503"/>
    </source>
</evidence>
<evidence type="ECO:0000305" key="2"/>
<accession>Q0VMG2</accession>
<reference key="1">
    <citation type="journal article" date="2006" name="Nat. Biotechnol.">
        <title>Genome sequence of the ubiquitous hydrocarbon-degrading marine bacterium Alcanivorax borkumensis.</title>
        <authorList>
            <person name="Schneiker S."/>
            <person name="Martins dos Santos V.A.P."/>
            <person name="Bartels D."/>
            <person name="Bekel T."/>
            <person name="Brecht M."/>
            <person name="Buhrmester J."/>
            <person name="Chernikova T.N."/>
            <person name="Denaro R."/>
            <person name="Ferrer M."/>
            <person name="Gertler C."/>
            <person name="Goesmann A."/>
            <person name="Golyshina O.V."/>
            <person name="Kaminski F."/>
            <person name="Khachane A.N."/>
            <person name="Lang S."/>
            <person name="Linke B."/>
            <person name="McHardy A.C."/>
            <person name="Meyer F."/>
            <person name="Nechitaylo T."/>
            <person name="Puehler A."/>
            <person name="Regenhardt D."/>
            <person name="Rupp O."/>
            <person name="Sabirova J.S."/>
            <person name="Selbitschka W."/>
            <person name="Yakimov M.M."/>
            <person name="Timmis K.N."/>
            <person name="Vorhoelter F.-J."/>
            <person name="Weidner S."/>
            <person name="Kaiser O."/>
            <person name="Golyshin P.N."/>
        </authorList>
    </citation>
    <scope>NUCLEOTIDE SEQUENCE [LARGE SCALE GENOMIC DNA]</scope>
    <source>
        <strain>ATCC 700651 / DSM 11573 / NCIMB 13689 / SK2</strain>
    </source>
</reference>
<feature type="chain" id="PRO_0000258440" description="Large ribosomal subunit protein bL9">
    <location>
        <begin position="1"/>
        <end position="150"/>
    </location>
</feature>
<comment type="function">
    <text evidence="1">Binds to the 23S rRNA.</text>
</comment>
<comment type="similarity">
    <text evidence="1">Belongs to the bacterial ribosomal protein bL9 family.</text>
</comment>
<name>RL9_ALCBS</name>
<keyword id="KW-1185">Reference proteome</keyword>
<keyword id="KW-0687">Ribonucleoprotein</keyword>
<keyword id="KW-0689">Ribosomal protein</keyword>
<keyword id="KW-0694">RNA-binding</keyword>
<keyword id="KW-0699">rRNA-binding</keyword>
<protein>
    <recommendedName>
        <fullName evidence="1">Large ribosomal subunit protein bL9</fullName>
    </recommendedName>
    <alternativeName>
        <fullName evidence="2">50S ribosomal protein L9</fullName>
    </alternativeName>
</protein>